<feature type="signal peptide" evidence="1">
    <location>
        <begin position="1"/>
        <end position="16"/>
    </location>
</feature>
<feature type="chain" id="PRO_0000398233" description="Lipoyl synthase, apicoplast">
    <location>
        <begin position="17"/>
        <end position="502"/>
    </location>
</feature>
<feature type="domain" description="Radical SAM core" evidence="2">
    <location>
        <begin position="204"/>
        <end position="422"/>
    </location>
</feature>
<feature type="binding site" evidence="1">
    <location>
        <position position="192"/>
    </location>
    <ligand>
        <name>[4Fe-4S] cluster</name>
        <dbReference type="ChEBI" id="CHEBI:49883"/>
        <label>1</label>
    </ligand>
</feature>
<feature type="binding site" evidence="1">
    <location>
        <position position="197"/>
    </location>
    <ligand>
        <name>[4Fe-4S] cluster</name>
        <dbReference type="ChEBI" id="CHEBI:49883"/>
        <label>1</label>
    </ligand>
</feature>
<feature type="binding site" evidence="1">
    <location>
        <position position="203"/>
    </location>
    <ligand>
        <name>[4Fe-4S] cluster</name>
        <dbReference type="ChEBI" id="CHEBI:49883"/>
        <label>1</label>
    </ligand>
</feature>
<feature type="binding site" evidence="1">
    <location>
        <position position="218"/>
    </location>
    <ligand>
        <name>[4Fe-4S] cluster</name>
        <dbReference type="ChEBI" id="CHEBI:49883"/>
        <label>2</label>
        <note>4Fe-4S-S-AdoMet</note>
    </ligand>
</feature>
<feature type="binding site" evidence="1">
    <location>
        <position position="222"/>
    </location>
    <ligand>
        <name>[4Fe-4S] cluster</name>
        <dbReference type="ChEBI" id="CHEBI:49883"/>
        <label>2</label>
        <note>4Fe-4S-S-AdoMet</note>
    </ligand>
</feature>
<feature type="binding site" evidence="1">
    <location>
        <position position="225"/>
    </location>
    <ligand>
        <name>[4Fe-4S] cluster</name>
        <dbReference type="ChEBI" id="CHEBI:49883"/>
        <label>2</label>
        <note>4Fe-4S-S-AdoMet</note>
    </ligand>
</feature>
<feature type="binding site" evidence="1">
    <location>
        <position position="433"/>
    </location>
    <ligand>
        <name>[4Fe-4S] cluster</name>
        <dbReference type="ChEBI" id="CHEBI:49883"/>
        <label>1</label>
    </ligand>
</feature>
<accession>Q7RBD6</accession>
<sequence length="502" mass="57463">MNFLVLFFSYSIFVLPYSILVYGISKDRKCCEYGNSVDSSKILYIAGSVRKRRKTFEKKINVSNFEREGNANGYKHIDNKGIYATKQNLEFDEARNKEANENNKNDATTVNRKIIIESENKNNHNNQEQNIKDCYTNENAQNDEKNKKVKIPKVGNAMPEKKPDWFHVPAPNGEKYKKLKSDLGKLKLHTVCEEAQCPNIGECWNIGTATIMLLGDTCTRGCKFCSIKTSSKPPPPDINEPFNTAKAICEWDINYIVITSVDRDDLPDGGADHFAKTVELIKFSKPSILIECLVSDFQGNIDSIKRLALSGLDVYAHNIETVKRLQKYVRDKRANYEQSLYVLKKAKEINPNLYTKTSIMLGLGETQDEVLQTMKDARSNDIDVITFGQYLRPTKNHLNVVEYISPQMFNYYKDVGLKMGFKYIASGPLVRSSYMAGEYFMKNMVEKGRNQKNQQIKPVELKLVTELDKLTECIQKEIKHREISVFIQVHAFLVNVFVLVRA</sequence>
<comment type="function">
    <text evidence="1">Catalyzes the radical-mediated insertion of two sulfur atoms into the C-6 and C-8 positions of the octanoyl moiety bound to the lipoyl domains of lipoate-dependent enzymes, thereby converting the octanoylated domains into lipoylated derivatives.</text>
</comment>
<comment type="catalytic activity">
    <reaction evidence="1">
        <text>[[Fe-S] cluster scaffold protein carrying a second [4Fe-4S](2+) cluster] + N(6)-octanoyl-L-lysyl-[protein] + 2 oxidized [2Fe-2S]-[ferredoxin] + 2 S-adenosyl-L-methionine + 4 H(+) = [[Fe-S] cluster scaffold protein] + N(6)-[(R)-dihydrolipoyl]-L-lysyl-[protein] + 4 Fe(3+) + 2 hydrogen sulfide + 2 5'-deoxyadenosine + 2 L-methionine + 2 reduced [2Fe-2S]-[ferredoxin]</text>
        <dbReference type="Rhea" id="RHEA:16585"/>
        <dbReference type="Rhea" id="RHEA-COMP:9928"/>
        <dbReference type="Rhea" id="RHEA-COMP:10000"/>
        <dbReference type="Rhea" id="RHEA-COMP:10001"/>
        <dbReference type="Rhea" id="RHEA-COMP:10475"/>
        <dbReference type="Rhea" id="RHEA-COMP:14568"/>
        <dbReference type="Rhea" id="RHEA-COMP:14569"/>
        <dbReference type="ChEBI" id="CHEBI:15378"/>
        <dbReference type="ChEBI" id="CHEBI:17319"/>
        <dbReference type="ChEBI" id="CHEBI:29034"/>
        <dbReference type="ChEBI" id="CHEBI:29919"/>
        <dbReference type="ChEBI" id="CHEBI:33722"/>
        <dbReference type="ChEBI" id="CHEBI:33737"/>
        <dbReference type="ChEBI" id="CHEBI:33738"/>
        <dbReference type="ChEBI" id="CHEBI:57844"/>
        <dbReference type="ChEBI" id="CHEBI:59789"/>
        <dbReference type="ChEBI" id="CHEBI:78809"/>
        <dbReference type="ChEBI" id="CHEBI:83100"/>
        <dbReference type="EC" id="2.8.1.8"/>
    </reaction>
</comment>
<comment type="cofactor">
    <cofactor evidence="1">
        <name>[4Fe-4S] cluster</name>
        <dbReference type="ChEBI" id="CHEBI:49883"/>
    </cofactor>
    <text evidence="1">Binds 2 [4Fe-4S] clusters per subunit. One cluster is coordinated with 3 cysteines and an exchangeable S-adenosyl-L-methionine.</text>
</comment>
<comment type="pathway">
    <text evidence="1">Protein modification; protein lipoylation via endogenous pathway; protein N(6)-(lipoyl)lysine from octanoyl-[acyl-carrier-protein]: step 2/2.</text>
</comment>
<comment type="subcellular location">
    <subcellularLocation>
        <location evidence="1">Plastid</location>
        <location evidence="1">Apicoplast</location>
    </subcellularLocation>
</comment>
<comment type="similarity">
    <text evidence="1">Belongs to the radical SAM superfamily. Lipoyl synthase family.</text>
</comment>
<dbReference type="EC" id="2.8.1.8" evidence="1"/>
<dbReference type="EMBL" id="AABL01002075">
    <property type="protein sequence ID" value="EAA18375.1"/>
    <property type="molecule type" value="Genomic_DNA"/>
</dbReference>
<dbReference type="SMR" id="Q7RBD6"/>
<dbReference type="FunCoup" id="Q7RBD6">
    <property type="interactions" value="275"/>
</dbReference>
<dbReference type="STRING" id="73239.Q7RBD6"/>
<dbReference type="PaxDb" id="73239-Q7RBD6"/>
<dbReference type="EnsemblProtists" id="EAA18375">
    <property type="protein sequence ID" value="EAA18375"/>
    <property type="gene ID" value="EAA18375"/>
</dbReference>
<dbReference type="KEGG" id="pyo:PY17X_1363200"/>
<dbReference type="InParanoid" id="Q7RBD6"/>
<dbReference type="UniPathway" id="UPA00538">
    <property type="reaction ID" value="UER00593"/>
</dbReference>
<dbReference type="Proteomes" id="UP000008553">
    <property type="component" value="Unassembled WGS sequence"/>
</dbReference>
<dbReference type="GO" id="GO:0020011">
    <property type="term" value="C:apicoplast"/>
    <property type="evidence" value="ECO:0007669"/>
    <property type="project" value="UniProtKB-SubCell"/>
</dbReference>
<dbReference type="GO" id="GO:0005739">
    <property type="term" value="C:mitochondrion"/>
    <property type="evidence" value="ECO:0007669"/>
    <property type="project" value="TreeGrafter"/>
</dbReference>
<dbReference type="GO" id="GO:0051539">
    <property type="term" value="F:4 iron, 4 sulfur cluster binding"/>
    <property type="evidence" value="ECO:0007669"/>
    <property type="project" value="UniProtKB-UniRule"/>
</dbReference>
<dbReference type="GO" id="GO:0016992">
    <property type="term" value="F:lipoate synthase activity"/>
    <property type="evidence" value="ECO:0007669"/>
    <property type="project" value="UniProtKB-UniRule"/>
</dbReference>
<dbReference type="GO" id="GO:0046872">
    <property type="term" value="F:metal ion binding"/>
    <property type="evidence" value="ECO:0007669"/>
    <property type="project" value="UniProtKB-KW"/>
</dbReference>
<dbReference type="CDD" id="cd01335">
    <property type="entry name" value="Radical_SAM"/>
    <property type="match status" value="1"/>
</dbReference>
<dbReference type="Gene3D" id="3.20.20.70">
    <property type="entry name" value="Aldolase class I"/>
    <property type="match status" value="1"/>
</dbReference>
<dbReference type="HAMAP" id="MF_00206">
    <property type="entry name" value="Lipoyl_synth"/>
    <property type="match status" value="1"/>
</dbReference>
<dbReference type="InterPro" id="IPR013785">
    <property type="entry name" value="Aldolase_TIM"/>
</dbReference>
<dbReference type="InterPro" id="IPR006638">
    <property type="entry name" value="Elp3/MiaA/NifB-like_rSAM"/>
</dbReference>
<dbReference type="InterPro" id="IPR031691">
    <property type="entry name" value="LIAS_N"/>
</dbReference>
<dbReference type="InterPro" id="IPR003698">
    <property type="entry name" value="Lipoyl_synth"/>
</dbReference>
<dbReference type="InterPro" id="IPR007197">
    <property type="entry name" value="rSAM"/>
</dbReference>
<dbReference type="NCBIfam" id="TIGR00510">
    <property type="entry name" value="lipA"/>
    <property type="match status" value="1"/>
</dbReference>
<dbReference type="NCBIfam" id="NF004019">
    <property type="entry name" value="PRK05481.1"/>
    <property type="match status" value="1"/>
</dbReference>
<dbReference type="NCBIfam" id="NF009544">
    <property type="entry name" value="PRK12928.1"/>
    <property type="match status" value="1"/>
</dbReference>
<dbReference type="PANTHER" id="PTHR10949">
    <property type="entry name" value="LIPOYL SYNTHASE"/>
    <property type="match status" value="1"/>
</dbReference>
<dbReference type="PANTHER" id="PTHR10949:SF0">
    <property type="entry name" value="LIPOYL SYNTHASE, MITOCHONDRIAL"/>
    <property type="match status" value="1"/>
</dbReference>
<dbReference type="Pfam" id="PF16881">
    <property type="entry name" value="LIAS_N"/>
    <property type="match status" value="1"/>
</dbReference>
<dbReference type="Pfam" id="PF04055">
    <property type="entry name" value="Radical_SAM"/>
    <property type="match status" value="1"/>
</dbReference>
<dbReference type="SFLD" id="SFLDF00271">
    <property type="entry name" value="lipoyl_synthase"/>
    <property type="match status" value="1"/>
</dbReference>
<dbReference type="SFLD" id="SFLDS00029">
    <property type="entry name" value="Radical_SAM"/>
    <property type="match status" value="1"/>
</dbReference>
<dbReference type="SMART" id="SM00729">
    <property type="entry name" value="Elp3"/>
    <property type="match status" value="1"/>
</dbReference>
<dbReference type="SUPFAM" id="SSF102114">
    <property type="entry name" value="Radical SAM enzymes"/>
    <property type="match status" value="1"/>
</dbReference>
<dbReference type="PROSITE" id="PS51918">
    <property type="entry name" value="RADICAL_SAM"/>
    <property type="match status" value="1"/>
</dbReference>
<reference key="1">
    <citation type="journal article" date="2002" name="Nature">
        <title>Genome sequence and comparative analysis of the model rodent malaria parasite Plasmodium yoelii yoelii.</title>
        <authorList>
            <person name="Carlton J.M."/>
            <person name="Angiuoli S.V."/>
            <person name="Suh B.B."/>
            <person name="Kooij T.W."/>
            <person name="Pertea M."/>
            <person name="Silva J.C."/>
            <person name="Ermolaeva M.D."/>
            <person name="Allen J.E."/>
            <person name="Selengut J.D."/>
            <person name="Koo H.L."/>
            <person name="Peterson J.D."/>
            <person name="Pop M."/>
            <person name="Kosack D.S."/>
            <person name="Shumway M.F."/>
            <person name="Bidwell S.L."/>
            <person name="Shallom S.J."/>
            <person name="van Aken S.E."/>
            <person name="Riedmuller S.B."/>
            <person name="Feldblyum T.V."/>
            <person name="Cho J.K."/>
            <person name="Quackenbush J."/>
            <person name="Sedegah M."/>
            <person name="Shoaibi A."/>
            <person name="Cummings L.M."/>
            <person name="Florens L."/>
            <person name="Yates J.R. III"/>
            <person name="Raine J.D."/>
            <person name="Sinden R.E."/>
            <person name="Harris M.A."/>
            <person name="Cunningham D.A."/>
            <person name="Preiser P.R."/>
            <person name="Bergman L.W."/>
            <person name="Vaidya A.B."/>
            <person name="van Lin L.H."/>
            <person name="Janse C.J."/>
            <person name="Waters A.P."/>
            <person name="Smith H.O."/>
            <person name="White O.R."/>
            <person name="Salzberg S.L."/>
            <person name="Venter J.C."/>
            <person name="Fraser C.M."/>
            <person name="Hoffman S.L."/>
            <person name="Gardner M.J."/>
            <person name="Carucci D.J."/>
        </authorList>
    </citation>
    <scope>NUCLEOTIDE SEQUENCE [LARGE SCALE GENOMIC DNA]</scope>
    <source>
        <strain>17XNL</strain>
    </source>
</reference>
<proteinExistence type="inferred from homology"/>
<evidence type="ECO:0000255" key="1">
    <source>
        <dbReference type="HAMAP-Rule" id="MF_03123"/>
    </source>
</evidence>
<evidence type="ECO:0000255" key="2">
    <source>
        <dbReference type="PROSITE-ProRule" id="PRU01266"/>
    </source>
</evidence>
<name>LIPA_PLAYO</name>
<protein>
    <recommendedName>
        <fullName evidence="1">Lipoyl synthase, apicoplast</fullName>
        <ecNumber evidence="1">2.8.1.8</ecNumber>
    </recommendedName>
    <alternativeName>
        <fullName evidence="1">Lipoate synthase</fullName>
        <shortName evidence="1">LS</shortName>
        <shortName evidence="1">Lip-syn</shortName>
    </alternativeName>
    <alternativeName>
        <fullName evidence="1">Lipoic acid synthase</fullName>
    </alternativeName>
</protein>
<organism>
    <name type="scientific">Plasmodium yoelii yoelii</name>
    <dbReference type="NCBI Taxonomy" id="73239"/>
    <lineage>
        <taxon>Eukaryota</taxon>
        <taxon>Sar</taxon>
        <taxon>Alveolata</taxon>
        <taxon>Apicomplexa</taxon>
        <taxon>Aconoidasida</taxon>
        <taxon>Haemosporida</taxon>
        <taxon>Plasmodiidae</taxon>
        <taxon>Plasmodium</taxon>
        <taxon>Plasmodium (Vinckeia)</taxon>
    </lineage>
</organism>
<keyword id="KW-0004">4Fe-4S</keyword>
<keyword id="KW-0933">Apicoplast</keyword>
<keyword id="KW-0408">Iron</keyword>
<keyword id="KW-0411">Iron-sulfur</keyword>
<keyword id="KW-0479">Metal-binding</keyword>
<keyword id="KW-0934">Plastid</keyword>
<keyword id="KW-1185">Reference proteome</keyword>
<keyword id="KW-0949">S-adenosyl-L-methionine</keyword>
<keyword id="KW-0732">Signal</keyword>
<keyword id="KW-0808">Transferase</keyword>
<gene>
    <name evidence="1" type="primary">lipA</name>
    <name type="ORF">PY06208</name>
</gene>